<comment type="function">
    <text evidence="1">Antimicrobial peptide. Active against fungal species B.cinerea (IC(50)=5.2 uM), A.niger (IC(50)=2.6 uM) and B.sorokinina (IC(50)=5.2 uM) but not against F.oxysporum, F.graminearum and P.debaryanum at concentrations below 10 uM. Inhibits growth of P.infestans at concentration between 1.3 uM and 5.2 uM. Active against bacterial species P.syringae, B.subtilis, X.campestris and C.michiganense.</text>
</comment>
<comment type="tissue specificity">
    <text evidence="1">Expressed in flowers but not in leaves, seeds or roots (at protein level).</text>
</comment>
<comment type="PTM">
    <text evidence="1">Disulfide bonds.</text>
</comment>
<comment type="mass spectrometry" mass="4818.3" method="MALDI" evidence="1"/>
<dbReference type="SMR" id="B3EWQ2"/>
<dbReference type="GO" id="GO:0050832">
    <property type="term" value="P:defense response to fungus"/>
    <property type="evidence" value="ECO:0000314"/>
    <property type="project" value="UniProtKB"/>
</dbReference>
<dbReference type="GO" id="GO:0050829">
    <property type="term" value="P:defense response to Gram-negative bacterium"/>
    <property type="evidence" value="ECO:0000314"/>
    <property type="project" value="UniProtKB"/>
</dbReference>
<dbReference type="GO" id="GO:0050830">
    <property type="term" value="P:defense response to Gram-positive bacterium"/>
    <property type="evidence" value="ECO:0000314"/>
    <property type="project" value="UniProtKB"/>
</dbReference>
<dbReference type="GO" id="GO:0031640">
    <property type="term" value="P:killing of cells of another organism"/>
    <property type="evidence" value="ECO:0007669"/>
    <property type="project" value="UniProtKB-KW"/>
</dbReference>
<organism>
    <name type="scientific">Taraxacum officinale</name>
    <name type="common">Common dandelion</name>
    <name type="synonym">Leontodon taraxacum</name>
    <dbReference type="NCBI Taxonomy" id="50225"/>
    <lineage>
        <taxon>Eukaryota</taxon>
        <taxon>Viridiplantae</taxon>
        <taxon>Streptophyta</taxon>
        <taxon>Embryophyta</taxon>
        <taxon>Tracheophyta</taxon>
        <taxon>Spermatophyta</taxon>
        <taxon>Magnoliopsida</taxon>
        <taxon>eudicotyledons</taxon>
        <taxon>Gunneridae</taxon>
        <taxon>Pentapetalae</taxon>
        <taxon>asterids</taxon>
        <taxon>campanulids</taxon>
        <taxon>Asterales</taxon>
        <taxon>Asteraceae</taxon>
        <taxon>Cichorioideae</taxon>
        <taxon>Cichorieae</taxon>
        <taxon>Crepidinae</taxon>
        <taxon>Taraxacum</taxon>
    </lineage>
</organism>
<sequence length="44" mass="4827">GGKCTVDWGGQGGGRRLPSPLFCCYKPTRICYLNQETCETETCP</sequence>
<reference evidence="3" key="1">
    <citation type="journal article" date="2012" name="Peptides">
        <title>Discovery of novel antimicrobial peptides with unusual cysteine motifs in dandelion Taraxacum officinale Wigg. flowers.</title>
        <authorList>
            <person name="Astafieva A.A."/>
            <person name="Rogozhin E.A."/>
            <person name="Odintsova T.I."/>
            <person name="Khadeeva N.V."/>
            <person name="Grishin E.V."/>
            <person name="Egorov T.S.A."/>
        </authorList>
    </citation>
    <scope>PROTEIN SEQUENCE</scope>
    <scope>FUNCTION</scope>
    <scope>TISSUE SPECIFICITY</scope>
    <scope>DISULFIDE BOND</scope>
    <scope>MASS SPECTROMETRY</scope>
    <source>
        <tissue evidence="1">Sepal</tissue>
    </source>
</reference>
<keyword id="KW-0044">Antibiotic</keyword>
<keyword id="KW-0929">Antimicrobial</keyword>
<keyword id="KW-0903">Direct protein sequencing</keyword>
<keyword id="KW-1015">Disulfide bond</keyword>
<keyword id="KW-0295">Fungicide</keyword>
<name>AMP2_TAROF</name>
<evidence type="ECO:0000269" key="1">
    <source>
    </source>
</evidence>
<evidence type="ECO:0000303" key="2">
    <source>
    </source>
</evidence>
<evidence type="ECO:0000305" key="3"/>
<proteinExistence type="evidence at protein level"/>
<accession>B3EWQ2</accession>
<protein>
    <recommendedName>
        <fullName evidence="2">Antimicrobial peptide 2</fullName>
        <shortName evidence="2">ToAMP2</shortName>
    </recommendedName>
</protein>
<feature type="peptide" id="PRO_0000419498" description="Antimicrobial peptide 2" evidence="1">
    <location>
        <begin position="1"/>
        <end position="44"/>
    </location>
</feature>